<sequence length="427" mass="45761">MNKSEQLFEQAQKIIPGGVNSPVRAFNGVGGTPCFIKRAQGAYIYDADDKAYIDYVGSWGPMILGHNHPAILEAVITTAKNGLSFGAPTEIEITMAEKVRELVPSMESLRMVSSGTEATMSAIRLARGYTGRDKILKFEGCYHGHADALLVKAGSGALTLGVPNSPGIPEDFAKHTLTVSYNNIDEVKEIFAKYADEIACIIVEPVAGNMNCIPPVEGFLEGLRDVCDQYSSVLIFDEVMTGFRVALGGAQAHYNIKPDLTTLGKVIGGGMPVGAFGGKQEIMDYIAPVGPVYQAGTLSGNPIAMAAGLASLTELAQGNKHQQLSSATEKLAMGLKAAAERNGVSLSVNYVGAMFGFFFTEDKNPITTYEQATQCDGEMFKRFFHLMLDEGVYLAPSSYETGFLSTSHTDDIIEKTLVAADKCFAQL</sequence>
<protein>
    <recommendedName>
        <fullName evidence="1">Glutamate-1-semialdehyde 2,1-aminomutase</fullName>
        <shortName evidence="1">GSA</shortName>
        <ecNumber evidence="1">5.4.3.8</ecNumber>
    </recommendedName>
    <alternativeName>
        <fullName evidence="1">Glutamate-1-semialdehyde aminotransferase</fullName>
        <shortName evidence="1">GSA-AT</shortName>
    </alternativeName>
</protein>
<gene>
    <name evidence="1" type="primary">hemL</name>
    <name type="ordered locus">CPS_4629</name>
</gene>
<keyword id="KW-0963">Cytoplasm</keyword>
<keyword id="KW-0413">Isomerase</keyword>
<keyword id="KW-0627">Porphyrin biosynthesis</keyword>
<keyword id="KW-0663">Pyridoxal phosphate</keyword>
<accession>Q47V96</accession>
<evidence type="ECO:0000255" key="1">
    <source>
        <dbReference type="HAMAP-Rule" id="MF_00375"/>
    </source>
</evidence>
<feature type="chain" id="PRO_0000243564" description="Glutamate-1-semialdehyde 2,1-aminomutase">
    <location>
        <begin position="1"/>
        <end position="427"/>
    </location>
</feature>
<feature type="modified residue" description="N6-(pyridoxal phosphate)lysine" evidence="1">
    <location>
        <position position="265"/>
    </location>
</feature>
<name>GSA_COLP3</name>
<organism>
    <name type="scientific">Colwellia psychrerythraea (strain 34H / ATCC BAA-681)</name>
    <name type="common">Vibrio psychroerythus</name>
    <dbReference type="NCBI Taxonomy" id="167879"/>
    <lineage>
        <taxon>Bacteria</taxon>
        <taxon>Pseudomonadati</taxon>
        <taxon>Pseudomonadota</taxon>
        <taxon>Gammaproteobacteria</taxon>
        <taxon>Alteromonadales</taxon>
        <taxon>Colwelliaceae</taxon>
        <taxon>Colwellia</taxon>
    </lineage>
</organism>
<comment type="catalytic activity">
    <reaction evidence="1">
        <text>(S)-4-amino-5-oxopentanoate = 5-aminolevulinate</text>
        <dbReference type="Rhea" id="RHEA:14265"/>
        <dbReference type="ChEBI" id="CHEBI:57501"/>
        <dbReference type="ChEBI" id="CHEBI:356416"/>
        <dbReference type="EC" id="5.4.3.8"/>
    </reaction>
</comment>
<comment type="cofactor">
    <cofactor evidence="1">
        <name>pyridoxal 5'-phosphate</name>
        <dbReference type="ChEBI" id="CHEBI:597326"/>
    </cofactor>
</comment>
<comment type="pathway">
    <text evidence="1">Porphyrin-containing compound metabolism; protoporphyrin-IX biosynthesis; 5-aminolevulinate from L-glutamyl-tRNA(Glu): step 2/2.</text>
</comment>
<comment type="subunit">
    <text evidence="1">Homodimer.</text>
</comment>
<comment type="subcellular location">
    <subcellularLocation>
        <location evidence="1">Cytoplasm</location>
    </subcellularLocation>
</comment>
<comment type="similarity">
    <text evidence="1">Belongs to the class-III pyridoxal-phosphate-dependent aminotransferase family. HemL subfamily.</text>
</comment>
<proteinExistence type="inferred from homology"/>
<reference key="1">
    <citation type="journal article" date="2005" name="Proc. Natl. Acad. Sci. U.S.A.">
        <title>The psychrophilic lifestyle as revealed by the genome sequence of Colwellia psychrerythraea 34H through genomic and proteomic analyses.</title>
        <authorList>
            <person name="Methe B.A."/>
            <person name="Nelson K.E."/>
            <person name="Deming J.W."/>
            <person name="Momen B."/>
            <person name="Melamud E."/>
            <person name="Zhang X."/>
            <person name="Moult J."/>
            <person name="Madupu R."/>
            <person name="Nelson W.C."/>
            <person name="Dodson R.J."/>
            <person name="Brinkac L.M."/>
            <person name="Daugherty S.C."/>
            <person name="Durkin A.S."/>
            <person name="DeBoy R.T."/>
            <person name="Kolonay J.F."/>
            <person name="Sullivan S.A."/>
            <person name="Zhou L."/>
            <person name="Davidsen T.M."/>
            <person name="Wu M."/>
            <person name="Huston A.L."/>
            <person name="Lewis M."/>
            <person name="Weaver B."/>
            <person name="Weidman J.F."/>
            <person name="Khouri H."/>
            <person name="Utterback T.R."/>
            <person name="Feldblyum T.V."/>
            <person name="Fraser C.M."/>
        </authorList>
    </citation>
    <scope>NUCLEOTIDE SEQUENCE [LARGE SCALE GENOMIC DNA]</scope>
    <source>
        <strain>34H / ATCC BAA-681</strain>
    </source>
</reference>
<dbReference type="EC" id="5.4.3.8" evidence="1"/>
<dbReference type="EMBL" id="CP000083">
    <property type="protein sequence ID" value="AAZ27946.1"/>
    <property type="molecule type" value="Genomic_DNA"/>
</dbReference>
<dbReference type="RefSeq" id="WP_011045357.1">
    <property type="nucleotide sequence ID" value="NC_003910.7"/>
</dbReference>
<dbReference type="SMR" id="Q47V96"/>
<dbReference type="STRING" id="167879.CPS_4629"/>
<dbReference type="KEGG" id="cps:CPS_4629"/>
<dbReference type="eggNOG" id="COG0001">
    <property type="taxonomic scope" value="Bacteria"/>
</dbReference>
<dbReference type="HOGENOM" id="CLU_016922_1_5_6"/>
<dbReference type="UniPathway" id="UPA00251">
    <property type="reaction ID" value="UER00317"/>
</dbReference>
<dbReference type="Proteomes" id="UP000000547">
    <property type="component" value="Chromosome"/>
</dbReference>
<dbReference type="GO" id="GO:0005737">
    <property type="term" value="C:cytoplasm"/>
    <property type="evidence" value="ECO:0007669"/>
    <property type="project" value="UniProtKB-SubCell"/>
</dbReference>
<dbReference type="GO" id="GO:0042286">
    <property type="term" value="F:glutamate-1-semialdehyde 2,1-aminomutase activity"/>
    <property type="evidence" value="ECO:0007669"/>
    <property type="project" value="UniProtKB-UniRule"/>
</dbReference>
<dbReference type="GO" id="GO:0030170">
    <property type="term" value="F:pyridoxal phosphate binding"/>
    <property type="evidence" value="ECO:0007669"/>
    <property type="project" value="InterPro"/>
</dbReference>
<dbReference type="GO" id="GO:0008483">
    <property type="term" value="F:transaminase activity"/>
    <property type="evidence" value="ECO:0007669"/>
    <property type="project" value="InterPro"/>
</dbReference>
<dbReference type="GO" id="GO:0006782">
    <property type="term" value="P:protoporphyrinogen IX biosynthetic process"/>
    <property type="evidence" value="ECO:0007669"/>
    <property type="project" value="UniProtKB-UniRule"/>
</dbReference>
<dbReference type="CDD" id="cd00610">
    <property type="entry name" value="OAT_like"/>
    <property type="match status" value="1"/>
</dbReference>
<dbReference type="FunFam" id="3.40.640.10:FF:000021">
    <property type="entry name" value="Glutamate-1-semialdehyde 2,1-aminomutase"/>
    <property type="match status" value="1"/>
</dbReference>
<dbReference type="Gene3D" id="3.90.1150.10">
    <property type="entry name" value="Aspartate Aminotransferase, domain 1"/>
    <property type="match status" value="1"/>
</dbReference>
<dbReference type="Gene3D" id="3.40.640.10">
    <property type="entry name" value="Type I PLP-dependent aspartate aminotransferase-like (Major domain)"/>
    <property type="match status" value="1"/>
</dbReference>
<dbReference type="HAMAP" id="MF_00375">
    <property type="entry name" value="HemL_aminotrans_3"/>
    <property type="match status" value="1"/>
</dbReference>
<dbReference type="InterPro" id="IPR004639">
    <property type="entry name" value="4pyrrol_synth_GluAld_NH2Trfase"/>
</dbReference>
<dbReference type="InterPro" id="IPR005814">
    <property type="entry name" value="Aminotrans_3"/>
</dbReference>
<dbReference type="InterPro" id="IPR049704">
    <property type="entry name" value="Aminotrans_3_PPA_site"/>
</dbReference>
<dbReference type="InterPro" id="IPR015424">
    <property type="entry name" value="PyrdxlP-dep_Trfase"/>
</dbReference>
<dbReference type="InterPro" id="IPR015421">
    <property type="entry name" value="PyrdxlP-dep_Trfase_major"/>
</dbReference>
<dbReference type="InterPro" id="IPR015422">
    <property type="entry name" value="PyrdxlP-dep_Trfase_small"/>
</dbReference>
<dbReference type="NCBIfam" id="TIGR00713">
    <property type="entry name" value="hemL"/>
    <property type="match status" value="1"/>
</dbReference>
<dbReference type="NCBIfam" id="NF000818">
    <property type="entry name" value="PRK00062.1"/>
    <property type="match status" value="1"/>
</dbReference>
<dbReference type="PANTHER" id="PTHR43713">
    <property type="entry name" value="GLUTAMATE-1-SEMIALDEHYDE 2,1-AMINOMUTASE"/>
    <property type="match status" value="1"/>
</dbReference>
<dbReference type="PANTHER" id="PTHR43713:SF3">
    <property type="entry name" value="GLUTAMATE-1-SEMIALDEHYDE 2,1-AMINOMUTASE 1, CHLOROPLASTIC-RELATED"/>
    <property type="match status" value="1"/>
</dbReference>
<dbReference type="Pfam" id="PF00202">
    <property type="entry name" value="Aminotran_3"/>
    <property type="match status" value="1"/>
</dbReference>
<dbReference type="SUPFAM" id="SSF53383">
    <property type="entry name" value="PLP-dependent transferases"/>
    <property type="match status" value="1"/>
</dbReference>
<dbReference type="PROSITE" id="PS00600">
    <property type="entry name" value="AA_TRANSFER_CLASS_3"/>
    <property type="match status" value="1"/>
</dbReference>